<dbReference type="EC" id="2.5.1.75" evidence="1"/>
<dbReference type="EMBL" id="CP000436">
    <property type="protein sequence ID" value="ABI25359.1"/>
    <property type="molecule type" value="Genomic_DNA"/>
</dbReference>
<dbReference type="SMR" id="Q0I462"/>
<dbReference type="KEGG" id="hso:HS_1084"/>
<dbReference type="eggNOG" id="COG0324">
    <property type="taxonomic scope" value="Bacteria"/>
</dbReference>
<dbReference type="HOGENOM" id="CLU_032616_0_0_6"/>
<dbReference type="GO" id="GO:0005524">
    <property type="term" value="F:ATP binding"/>
    <property type="evidence" value="ECO:0007669"/>
    <property type="project" value="UniProtKB-UniRule"/>
</dbReference>
<dbReference type="GO" id="GO:0052381">
    <property type="term" value="F:tRNA dimethylallyltransferase activity"/>
    <property type="evidence" value="ECO:0007669"/>
    <property type="project" value="UniProtKB-UniRule"/>
</dbReference>
<dbReference type="GO" id="GO:0006400">
    <property type="term" value="P:tRNA modification"/>
    <property type="evidence" value="ECO:0007669"/>
    <property type="project" value="TreeGrafter"/>
</dbReference>
<dbReference type="FunFam" id="1.10.20.140:FF:000001">
    <property type="entry name" value="tRNA dimethylallyltransferase"/>
    <property type="match status" value="1"/>
</dbReference>
<dbReference type="Gene3D" id="1.10.20.140">
    <property type="match status" value="1"/>
</dbReference>
<dbReference type="Gene3D" id="3.40.50.300">
    <property type="entry name" value="P-loop containing nucleotide triphosphate hydrolases"/>
    <property type="match status" value="1"/>
</dbReference>
<dbReference type="HAMAP" id="MF_00185">
    <property type="entry name" value="IPP_trans"/>
    <property type="match status" value="1"/>
</dbReference>
<dbReference type="InterPro" id="IPR039657">
    <property type="entry name" value="Dimethylallyltransferase"/>
</dbReference>
<dbReference type="InterPro" id="IPR018022">
    <property type="entry name" value="IPT"/>
</dbReference>
<dbReference type="InterPro" id="IPR027417">
    <property type="entry name" value="P-loop_NTPase"/>
</dbReference>
<dbReference type="NCBIfam" id="TIGR00174">
    <property type="entry name" value="miaA"/>
    <property type="match status" value="1"/>
</dbReference>
<dbReference type="PANTHER" id="PTHR11088">
    <property type="entry name" value="TRNA DIMETHYLALLYLTRANSFERASE"/>
    <property type="match status" value="1"/>
</dbReference>
<dbReference type="PANTHER" id="PTHR11088:SF60">
    <property type="entry name" value="TRNA DIMETHYLALLYLTRANSFERASE"/>
    <property type="match status" value="1"/>
</dbReference>
<dbReference type="Pfam" id="PF01715">
    <property type="entry name" value="IPPT"/>
    <property type="match status" value="1"/>
</dbReference>
<dbReference type="SUPFAM" id="SSF52540">
    <property type="entry name" value="P-loop containing nucleoside triphosphate hydrolases"/>
    <property type="match status" value="1"/>
</dbReference>
<protein>
    <recommendedName>
        <fullName evidence="1">tRNA dimethylallyltransferase</fullName>
        <ecNumber evidence="1">2.5.1.75</ecNumber>
    </recommendedName>
    <alternativeName>
        <fullName evidence="1">Dimethylallyl diphosphate:tRNA dimethylallyltransferase</fullName>
        <shortName evidence="1">DMAPP:tRNA dimethylallyltransferase</shortName>
        <shortName evidence="1">DMATase</shortName>
    </alternativeName>
    <alternativeName>
        <fullName evidence="1">Isopentenyl-diphosphate:tRNA isopentenyltransferase</fullName>
        <shortName evidence="1">IPP transferase</shortName>
        <shortName evidence="1">IPPT</shortName>
        <shortName evidence="1">IPTase</shortName>
    </alternativeName>
</protein>
<keyword id="KW-0067">ATP-binding</keyword>
<keyword id="KW-0460">Magnesium</keyword>
<keyword id="KW-0547">Nucleotide-binding</keyword>
<keyword id="KW-0808">Transferase</keyword>
<keyword id="KW-0819">tRNA processing</keyword>
<feature type="chain" id="PRO_1000020607" description="tRNA dimethylallyltransferase">
    <location>
        <begin position="1"/>
        <end position="311"/>
    </location>
</feature>
<feature type="region of interest" description="Interaction with substrate tRNA" evidence="1">
    <location>
        <begin position="37"/>
        <end position="40"/>
    </location>
</feature>
<feature type="region of interest" description="Interaction with substrate tRNA" evidence="1">
    <location>
        <begin position="161"/>
        <end position="165"/>
    </location>
</feature>
<feature type="region of interest" description="Interaction with substrate tRNA" evidence="1">
    <location>
        <begin position="241"/>
        <end position="246"/>
    </location>
</feature>
<feature type="binding site" evidence="1">
    <location>
        <begin position="12"/>
        <end position="19"/>
    </location>
    <ligand>
        <name>ATP</name>
        <dbReference type="ChEBI" id="CHEBI:30616"/>
    </ligand>
</feature>
<feature type="binding site" evidence="1">
    <location>
        <begin position="14"/>
        <end position="19"/>
    </location>
    <ligand>
        <name>substrate</name>
    </ligand>
</feature>
<feature type="site" description="Interaction with substrate tRNA" evidence="1">
    <location>
        <position position="103"/>
    </location>
</feature>
<feature type="site" description="Interaction with substrate tRNA" evidence="1">
    <location>
        <position position="125"/>
    </location>
</feature>
<accession>Q0I462</accession>
<proteinExistence type="inferred from homology"/>
<sequence length="311" mass="35659">MNKKSTAIFLMGPTASGKTDLAIQLHQELPVEVISVDSALIYKGMDIGTAKPNAQELALTPHRLIDIKDPSENYSAAEFRHDALQEMQKITQQGKIPLLVGGTMLYYKALLEGLSPLPSADEKVRLEIEQKAEKFGWATLHNELAKIDPISAQRINPNDSQRINRALEVFYLTGQSLTELTAQKGKEIPYHIIQFAIAPDRAVLHQRIEQRFHKMIEQGFQQEVEKLYQRSDLHPNLPSIRCVGYRQMWEYLQGNYDKDEMIFRGICATRQLAKRQLTWLRGWKSPIEWLDSLNPKSTKEKIIKTIKHNCK</sequence>
<reference key="1">
    <citation type="journal article" date="2007" name="J. Bacteriol.">
        <title>Complete genome sequence of Haemophilus somnus (Histophilus somni) strain 129Pt and comparison to Haemophilus ducreyi 35000HP and Haemophilus influenzae Rd.</title>
        <authorList>
            <person name="Challacombe J.F."/>
            <person name="Duncan A.J."/>
            <person name="Brettin T.S."/>
            <person name="Bruce D."/>
            <person name="Chertkov O."/>
            <person name="Detter J.C."/>
            <person name="Han C.S."/>
            <person name="Misra M."/>
            <person name="Richardson P."/>
            <person name="Tapia R."/>
            <person name="Thayer N."/>
            <person name="Xie G."/>
            <person name="Inzana T.J."/>
        </authorList>
    </citation>
    <scope>NUCLEOTIDE SEQUENCE [LARGE SCALE GENOMIC DNA]</scope>
    <source>
        <strain>129Pt</strain>
    </source>
</reference>
<comment type="function">
    <text evidence="1">Catalyzes the transfer of a dimethylallyl group onto the adenine at position 37 in tRNAs that read codons beginning with uridine, leading to the formation of N6-(dimethylallyl)adenosine (i(6)A).</text>
</comment>
<comment type="catalytic activity">
    <reaction evidence="1">
        <text>adenosine(37) in tRNA + dimethylallyl diphosphate = N(6)-dimethylallyladenosine(37) in tRNA + diphosphate</text>
        <dbReference type="Rhea" id="RHEA:26482"/>
        <dbReference type="Rhea" id="RHEA-COMP:10162"/>
        <dbReference type="Rhea" id="RHEA-COMP:10375"/>
        <dbReference type="ChEBI" id="CHEBI:33019"/>
        <dbReference type="ChEBI" id="CHEBI:57623"/>
        <dbReference type="ChEBI" id="CHEBI:74411"/>
        <dbReference type="ChEBI" id="CHEBI:74415"/>
        <dbReference type="EC" id="2.5.1.75"/>
    </reaction>
</comment>
<comment type="cofactor">
    <cofactor evidence="1">
        <name>Mg(2+)</name>
        <dbReference type="ChEBI" id="CHEBI:18420"/>
    </cofactor>
</comment>
<comment type="subunit">
    <text evidence="1">Monomer.</text>
</comment>
<comment type="similarity">
    <text evidence="1">Belongs to the IPP transferase family.</text>
</comment>
<name>MIAA_HISS1</name>
<gene>
    <name evidence="1" type="primary">miaA</name>
    <name type="ordered locus">HS_1084</name>
</gene>
<evidence type="ECO:0000255" key="1">
    <source>
        <dbReference type="HAMAP-Rule" id="MF_00185"/>
    </source>
</evidence>
<organism>
    <name type="scientific">Histophilus somni (strain 129Pt)</name>
    <name type="common">Haemophilus somnus</name>
    <dbReference type="NCBI Taxonomy" id="205914"/>
    <lineage>
        <taxon>Bacteria</taxon>
        <taxon>Pseudomonadati</taxon>
        <taxon>Pseudomonadota</taxon>
        <taxon>Gammaproteobacteria</taxon>
        <taxon>Pasteurellales</taxon>
        <taxon>Pasteurellaceae</taxon>
        <taxon>Histophilus</taxon>
    </lineage>
</organism>